<name>ISPG_MYCLB</name>
<sequence length="392" mass="41414">MNMRLGMPEAPAPGLAPRRITRQLMVGNVGVGSDHQISVQSMCITKTHDVNATLQQIAELTTAGCDIVRVACPRQEDADALAEIARHSKIPVIVDIHFQPKYIFAAIDAGCAAVRVNPGNIKEFDGRVGEVAKAAAAAGIPIRIGVNAGSLDKRFMDKYGKATSEALVESALWEASLFEEHGFGNIKISVKHHDPVVMVAAYEQLAAQCDYPLHLGVTEAGPVFQGTVKSAVAFGALLSKGIGDTIRVSLSAPPVEEIKVGNQILESLNLRPRSHEIVSCPSCGRAQVDVYKLANEVSAGLDGLEVPLRIAVMGCVVNGPGEARDADLGVASGNGKGQIFVKGEVIKTVPEAQIVETLIEEAMRLVSEMGTEKGSDHCSETTRSGSPVVTVN</sequence>
<evidence type="ECO:0000255" key="1">
    <source>
        <dbReference type="HAMAP-Rule" id="MF_00159"/>
    </source>
</evidence>
<evidence type="ECO:0000256" key="2">
    <source>
        <dbReference type="SAM" id="MobiDB-lite"/>
    </source>
</evidence>
<gene>
    <name evidence="1" type="primary">ispG</name>
    <name type="ordered locus">MLBr01581</name>
</gene>
<accession>B8ZRU5</accession>
<organism>
    <name type="scientific">Mycobacterium leprae (strain Br4923)</name>
    <dbReference type="NCBI Taxonomy" id="561304"/>
    <lineage>
        <taxon>Bacteria</taxon>
        <taxon>Bacillati</taxon>
        <taxon>Actinomycetota</taxon>
        <taxon>Actinomycetes</taxon>
        <taxon>Mycobacteriales</taxon>
        <taxon>Mycobacteriaceae</taxon>
        <taxon>Mycobacterium</taxon>
    </lineage>
</organism>
<keyword id="KW-0004">4Fe-4S</keyword>
<keyword id="KW-0408">Iron</keyword>
<keyword id="KW-0411">Iron-sulfur</keyword>
<keyword id="KW-0414">Isoprene biosynthesis</keyword>
<keyword id="KW-0479">Metal-binding</keyword>
<keyword id="KW-0560">Oxidoreductase</keyword>
<feature type="chain" id="PRO_1000123454" description="4-hydroxy-3-methylbut-2-en-1-yl diphosphate synthase (flavodoxin)">
    <location>
        <begin position="1"/>
        <end position="392"/>
    </location>
</feature>
<feature type="region of interest" description="Disordered" evidence="2">
    <location>
        <begin position="371"/>
        <end position="392"/>
    </location>
</feature>
<feature type="compositionally biased region" description="Basic and acidic residues" evidence="2">
    <location>
        <begin position="371"/>
        <end position="380"/>
    </location>
</feature>
<feature type="compositionally biased region" description="Polar residues" evidence="2">
    <location>
        <begin position="381"/>
        <end position="392"/>
    </location>
</feature>
<feature type="binding site" evidence="1">
    <location>
        <position position="280"/>
    </location>
    <ligand>
        <name>[4Fe-4S] cluster</name>
        <dbReference type="ChEBI" id="CHEBI:49883"/>
    </ligand>
</feature>
<feature type="binding site" evidence="1">
    <location>
        <position position="283"/>
    </location>
    <ligand>
        <name>[4Fe-4S] cluster</name>
        <dbReference type="ChEBI" id="CHEBI:49883"/>
    </ligand>
</feature>
<feature type="binding site" evidence="1">
    <location>
        <position position="315"/>
    </location>
    <ligand>
        <name>[4Fe-4S] cluster</name>
        <dbReference type="ChEBI" id="CHEBI:49883"/>
    </ligand>
</feature>
<feature type="binding site" evidence="1">
    <location>
        <position position="322"/>
    </location>
    <ligand>
        <name>[4Fe-4S] cluster</name>
        <dbReference type="ChEBI" id="CHEBI:49883"/>
    </ligand>
</feature>
<reference key="1">
    <citation type="journal article" date="2009" name="Nat. Genet.">
        <title>Comparative genomic and phylogeographic analysis of Mycobacterium leprae.</title>
        <authorList>
            <person name="Monot M."/>
            <person name="Honore N."/>
            <person name="Garnier T."/>
            <person name="Zidane N."/>
            <person name="Sherafi D."/>
            <person name="Paniz-Mondolfi A."/>
            <person name="Matsuoka M."/>
            <person name="Taylor G.M."/>
            <person name="Donoghue H.D."/>
            <person name="Bouwman A."/>
            <person name="Mays S."/>
            <person name="Watson C."/>
            <person name="Lockwood D."/>
            <person name="Khamispour A."/>
            <person name="Dowlati Y."/>
            <person name="Jianping S."/>
            <person name="Rea T.H."/>
            <person name="Vera-Cabrera L."/>
            <person name="Stefani M.M."/>
            <person name="Banu S."/>
            <person name="Macdonald M."/>
            <person name="Sapkota B.R."/>
            <person name="Spencer J.S."/>
            <person name="Thomas J."/>
            <person name="Harshman K."/>
            <person name="Singh P."/>
            <person name="Busso P."/>
            <person name="Gattiker A."/>
            <person name="Rougemont J."/>
            <person name="Brennan P.J."/>
            <person name="Cole S.T."/>
        </authorList>
    </citation>
    <scope>NUCLEOTIDE SEQUENCE [LARGE SCALE GENOMIC DNA]</scope>
    <source>
        <strain>Br4923</strain>
    </source>
</reference>
<comment type="function">
    <text evidence="1">Converts 2C-methyl-D-erythritol 2,4-cyclodiphosphate (ME-2,4cPP) into 1-hydroxy-2-methyl-2-(E)-butenyl 4-diphosphate.</text>
</comment>
<comment type="catalytic activity">
    <reaction evidence="1">
        <text>(2E)-4-hydroxy-3-methylbut-2-enyl diphosphate + oxidized [flavodoxin] + H2O + 2 H(+) = 2-C-methyl-D-erythritol 2,4-cyclic diphosphate + reduced [flavodoxin]</text>
        <dbReference type="Rhea" id="RHEA:43604"/>
        <dbReference type="Rhea" id="RHEA-COMP:10622"/>
        <dbReference type="Rhea" id="RHEA-COMP:10623"/>
        <dbReference type="ChEBI" id="CHEBI:15377"/>
        <dbReference type="ChEBI" id="CHEBI:15378"/>
        <dbReference type="ChEBI" id="CHEBI:57618"/>
        <dbReference type="ChEBI" id="CHEBI:58210"/>
        <dbReference type="ChEBI" id="CHEBI:58483"/>
        <dbReference type="ChEBI" id="CHEBI:128753"/>
        <dbReference type="EC" id="1.17.7.3"/>
    </reaction>
</comment>
<comment type="cofactor">
    <cofactor evidence="1">
        <name>[4Fe-4S] cluster</name>
        <dbReference type="ChEBI" id="CHEBI:49883"/>
    </cofactor>
    <text evidence="1">Binds 1 [4Fe-4S] cluster.</text>
</comment>
<comment type="pathway">
    <text evidence="1">Isoprenoid biosynthesis; isopentenyl diphosphate biosynthesis via DXP pathway; isopentenyl diphosphate from 1-deoxy-D-xylulose 5-phosphate: step 5/6.</text>
</comment>
<comment type="similarity">
    <text evidence="1">Belongs to the IspG family.</text>
</comment>
<dbReference type="EC" id="1.17.7.3" evidence="1"/>
<dbReference type="EMBL" id="FM211192">
    <property type="protein sequence ID" value="CAR71676.1"/>
    <property type="molecule type" value="Genomic_DNA"/>
</dbReference>
<dbReference type="SMR" id="B8ZRU5"/>
<dbReference type="KEGG" id="mlb:MLBr01581"/>
<dbReference type="HOGENOM" id="CLU_042258_0_0_11"/>
<dbReference type="UniPathway" id="UPA00056">
    <property type="reaction ID" value="UER00096"/>
</dbReference>
<dbReference type="Proteomes" id="UP000006900">
    <property type="component" value="Chromosome"/>
</dbReference>
<dbReference type="GO" id="GO:0051539">
    <property type="term" value="F:4 iron, 4 sulfur cluster binding"/>
    <property type="evidence" value="ECO:0007669"/>
    <property type="project" value="UniProtKB-UniRule"/>
</dbReference>
<dbReference type="GO" id="GO:0046429">
    <property type="term" value="F:4-hydroxy-3-methylbut-2-en-1-yl diphosphate synthase activity (ferredoxin)"/>
    <property type="evidence" value="ECO:0007669"/>
    <property type="project" value="UniProtKB-UniRule"/>
</dbReference>
<dbReference type="GO" id="GO:0141197">
    <property type="term" value="F:4-hydroxy-3-methylbut-2-enyl-diphosphate synthase activity (flavodoxin)"/>
    <property type="evidence" value="ECO:0007669"/>
    <property type="project" value="UniProtKB-EC"/>
</dbReference>
<dbReference type="GO" id="GO:0005506">
    <property type="term" value="F:iron ion binding"/>
    <property type="evidence" value="ECO:0007669"/>
    <property type="project" value="InterPro"/>
</dbReference>
<dbReference type="GO" id="GO:0019288">
    <property type="term" value="P:isopentenyl diphosphate biosynthetic process, methylerythritol 4-phosphate pathway"/>
    <property type="evidence" value="ECO:0007669"/>
    <property type="project" value="UniProtKB-UniRule"/>
</dbReference>
<dbReference type="GO" id="GO:0016114">
    <property type="term" value="P:terpenoid biosynthetic process"/>
    <property type="evidence" value="ECO:0007669"/>
    <property type="project" value="InterPro"/>
</dbReference>
<dbReference type="FunFam" id="3.20.20.20:FF:000001">
    <property type="entry name" value="4-hydroxy-3-methylbut-2-en-1-yl diphosphate synthase (flavodoxin)"/>
    <property type="match status" value="1"/>
</dbReference>
<dbReference type="Gene3D" id="3.20.20.20">
    <property type="entry name" value="Dihydropteroate synthase-like"/>
    <property type="match status" value="1"/>
</dbReference>
<dbReference type="Gene3D" id="3.30.413.10">
    <property type="entry name" value="Sulfite Reductase Hemoprotein, domain 1"/>
    <property type="match status" value="1"/>
</dbReference>
<dbReference type="HAMAP" id="MF_00159">
    <property type="entry name" value="IspG"/>
    <property type="match status" value="1"/>
</dbReference>
<dbReference type="InterPro" id="IPR011005">
    <property type="entry name" value="Dihydropteroate_synth-like_sf"/>
</dbReference>
<dbReference type="InterPro" id="IPR016425">
    <property type="entry name" value="IspG_bac"/>
</dbReference>
<dbReference type="InterPro" id="IPR004588">
    <property type="entry name" value="IspG_bac-typ"/>
</dbReference>
<dbReference type="InterPro" id="IPR045854">
    <property type="entry name" value="NO2/SO3_Rdtase_4Fe4S_sf"/>
</dbReference>
<dbReference type="NCBIfam" id="TIGR00612">
    <property type="entry name" value="ispG_gcpE"/>
    <property type="match status" value="1"/>
</dbReference>
<dbReference type="NCBIfam" id="NF001540">
    <property type="entry name" value="PRK00366.1"/>
    <property type="match status" value="1"/>
</dbReference>
<dbReference type="PANTHER" id="PTHR30454">
    <property type="entry name" value="4-HYDROXY-3-METHYLBUT-2-EN-1-YL DIPHOSPHATE SYNTHASE"/>
    <property type="match status" value="1"/>
</dbReference>
<dbReference type="PANTHER" id="PTHR30454:SF0">
    <property type="entry name" value="4-HYDROXY-3-METHYLBUT-2-EN-1-YL DIPHOSPHATE SYNTHASE (FERREDOXIN), CHLOROPLASTIC"/>
    <property type="match status" value="1"/>
</dbReference>
<dbReference type="Pfam" id="PF04551">
    <property type="entry name" value="GcpE"/>
    <property type="match status" value="1"/>
</dbReference>
<dbReference type="PIRSF" id="PIRSF004640">
    <property type="entry name" value="IspG"/>
    <property type="match status" value="1"/>
</dbReference>
<dbReference type="SUPFAM" id="SSF51717">
    <property type="entry name" value="Dihydropteroate synthetase-like"/>
    <property type="match status" value="1"/>
</dbReference>
<dbReference type="SUPFAM" id="SSF56014">
    <property type="entry name" value="Nitrite and sulphite reductase 4Fe-4S domain-like"/>
    <property type="match status" value="1"/>
</dbReference>
<protein>
    <recommendedName>
        <fullName evidence="1">4-hydroxy-3-methylbut-2-en-1-yl diphosphate synthase (flavodoxin)</fullName>
        <ecNumber evidence="1">1.17.7.3</ecNumber>
    </recommendedName>
    <alternativeName>
        <fullName evidence="1">1-hydroxy-2-methyl-2-(E)-butenyl 4-diphosphate synthase</fullName>
    </alternativeName>
</protein>
<proteinExistence type="inferred from homology"/>